<reference key="1">
    <citation type="journal article" date="1996" name="Science">
        <title>Complete genome sequence of the methanogenic archaeon, Methanococcus jannaschii.</title>
        <authorList>
            <person name="Bult C.J."/>
            <person name="White O."/>
            <person name="Olsen G.J."/>
            <person name="Zhou L."/>
            <person name="Fleischmann R.D."/>
            <person name="Sutton G.G."/>
            <person name="Blake J.A."/>
            <person name="FitzGerald L.M."/>
            <person name="Clayton R.A."/>
            <person name="Gocayne J.D."/>
            <person name="Kerlavage A.R."/>
            <person name="Dougherty B.A."/>
            <person name="Tomb J.-F."/>
            <person name="Adams M.D."/>
            <person name="Reich C.I."/>
            <person name="Overbeek R."/>
            <person name="Kirkness E.F."/>
            <person name="Weinstock K.G."/>
            <person name="Merrick J.M."/>
            <person name="Glodek A."/>
            <person name="Scott J.L."/>
            <person name="Geoghagen N.S.M."/>
            <person name="Weidman J.F."/>
            <person name="Fuhrmann J.L."/>
            <person name="Nguyen D."/>
            <person name="Utterback T.R."/>
            <person name="Kelley J.M."/>
            <person name="Peterson J.D."/>
            <person name="Sadow P.W."/>
            <person name="Hanna M.C."/>
            <person name="Cotton M.D."/>
            <person name="Roberts K.M."/>
            <person name="Hurst M.A."/>
            <person name="Kaine B.P."/>
            <person name="Borodovsky M."/>
            <person name="Klenk H.-P."/>
            <person name="Fraser C.M."/>
            <person name="Smith H.O."/>
            <person name="Woese C.R."/>
            <person name="Venter J.C."/>
        </authorList>
    </citation>
    <scope>NUCLEOTIDE SEQUENCE [LARGE SCALE GENOMIC DNA]</scope>
    <source>
        <strain>ATCC 43067 / DSM 2661 / JAL-1 / JCM 10045 / NBRC 100440</strain>
    </source>
</reference>
<gene>
    <name type="ordered locus">MJ0347</name>
</gene>
<sequence length="151" mass="16627">MGFDPVTFAKIKKISIDSNADGYIDYANQAGNADKLDGKDASDFLSIDSFKDLKEDNGYIKFPTGLIMQWGKVYVNNTTSYQEIPVNFTIEFPNKCLNVFASIYEGSGVDNDYIKCITRIANITTKGCVVCITDISGASGDVGFFWFAIGY</sequence>
<protein>
    <recommendedName>
        <fullName>Uncharacterized protein MJ0347</fullName>
    </recommendedName>
</protein>
<accession>Q57793</accession>
<keyword id="KW-1185">Reference proteome</keyword>
<name>Y347_METJA</name>
<organism>
    <name type="scientific">Methanocaldococcus jannaschii (strain ATCC 43067 / DSM 2661 / JAL-1 / JCM 10045 / NBRC 100440)</name>
    <name type="common">Methanococcus jannaschii</name>
    <dbReference type="NCBI Taxonomy" id="243232"/>
    <lineage>
        <taxon>Archaea</taxon>
        <taxon>Methanobacteriati</taxon>
        <taxon>Methanobacteriota</taxon>
        <taxon>Methanomada group</taxon>
        <taxon>Methanococci</taxon>
        <taxon>Methanococcales</taxon>
        <taxon>Methanocaldococcaceae</taxon>
        <taxon>Methanocaldococcus</taxon>
    </lineage>
</organism>
<dbReference type="EMBL" id="L77117">
    <property type="protein sequence ID" value="AAB98331.1"/>
    <property type="molecule type" value="Genomic_DNA"/>
</dbReference>
<dbReference type="PIR" id="C64343">
    <property type="entry name" value="C64343"/>
</dbReference>
<dbReference type="RefSeq" id="WP_010869845.1">
    <property type="nucleotide sequence ID" value="NC_000909.1"/>
</dbReference>
<dbReference type="SMR" id="Q57793"/>
<dbReference type="STRING" id="243232.MJ_0347"/>
<dbReference type="PaxDb" id="243232-MJ_0347"/>
<dbReference type="EnsemblBacteria" id="AAB98331">
    <property type="protein sequence ID" value="AAB98331"/>
    <property type="gene ID" value="MJ_0347"/>
</dbReference>
<dbReference type="GeneID" id="1451203"/>
<dbReference type="KEGG" id="mja:MJ_0347"/>
<dbReference type="HOGENOM" id="CLU_1727253_0_0_2"/>
<dbReference type="InParanoid" id="Q57793"/>
<dbReference type="Proteomes" id="UP000000805">
    <property type="component" value="Chromosome"/>
</dbReference>
<dbReference type="Gene3D" id="2.60.40.3940">
    <property type="match status" value="1"/>
</dbReference>
<dbReference type="InterPro" id="IPR054075">
    <property type="entry name" value="Gp53-like_C"/>
</dbReference>
<dbReference type="Pfam" id="PF21882">
    <property type="entry name" value="Gp53-like_C"/>
    <property type="match status" value="1"/>
</dbReference>
<proteinExistence type="predicted"/>
<feature type="chain" id="PRO_0000106817" description="Uncharacterized protein MJ0347">
    <location>
        <begin position="1"/>
        <end position="151"/>
    </location>
</feature>